<reference key="1">
    <citation type="journal article" date="2005" name="Proc. Natl. Acad. Sci. U.S.A.">
        <title>The psychrophilic lifestyle as revealed by the genome sequence of Colwellia psychrerythraea 34H through genomic and proteomic analyses.</title>
        <authorList>
            <person name="Methe B.A."/>
            <person name="Nelson K.E."/>
            <person name="Deming J.W."/>
            <person name="Momen B."/>
            <person name="Melamud E."/>
            <person name="Zhang X."/>
            <person name="Moult J."/>
            <person name="Madupu R."/>
            <person name="Nelson W.C."/>
            <person name="Dodson R.J."/>
            <person name="Brinkac L.M."/>
            <person name="Daugherty S.C."/>
            <person name="Durkin A.S."/>
            <person name="DeBoy R.T."/>
            <person name="Kolonay J.F."/>
            <person name="Sullivan S.A."/>
            <person name="Zhou L."/>
            <person name="Davidsen T.M."/>
            <person name="Wu M."/>
            <person name="Huston A.L."/>
            <person name="Lewis M."/>
            <person name="Weaver B."/>
            <person name="Weidman J.F."/>
            <person name="Khouri H."/>
            <person name="Utterback T.R."/>
            <person name="Feldblyum T.V."/>
            <person name="Fraser C.M."/>
        </authorList>
    </citation>
    <scope>NUCLEOTIDE SEQUENCE [LARGE SCALE GENOMIC DNA]</scope>
    <source>
        <strain>34H / ATCC BAA-681</strain>
    </source>
</reference>
<keyword id="KW-0456">Lyase</keyword>
<feature type="chain" id="PRO_0000231447" description="Putative pterin-4-alpha-carbinolamine dehydratase">
    <location>
        <begin position="1"/>
        <end position="117"/>
    </location>
</feature>
<proteinExistence type="inferred from homology"/>
<organism>
    <name type="scientific">Colwellia psychrerythraea (strain 34H / ATCC BAA-681)</name>
    <name type="common">Vibrio psychroerythus</name>
    <dbReference type="NCBI Taxonomy" id="167879"/>
    <lineage>
        <taxon>Bacteria</taxon>
        <taxon>Pseudomonadati</taxon>
        <taxon>Pseudomonadota</taxon>
        <taxon>Gammaproteobacteria</taxon>
        <taxon>Alteromonadales</taxon>
        <taxon>Colwelliaceae</taxon>
        <taxon>Colwellia</taxon>
    </lineage>
</organism>
<protein>
    <recommendedName>
        <fullName evidence="1">Putative pterin-4-alpha-carbinolamine dehydratase</fullName>
        <shortName evidence="1">PHS</shortName>
        <ecNumber evidence="1">4.2.1.96</ecNumber>
    </recommendedName>
    <alternativeName>
        <fullName evidence="1">4-alpha-hydroxy-tetrahydropterin dehydratase</fullName>
    </alternativeName>
    <alternativeName>
        <fullName evidence="1">Pterin carbinolamine dehydratase</fullName>
        <shortName evidence="1">PCD</shortName>
    </alternativeName>
</protein>
<sequence length="117" mass="13371">MTVQSNNKLASQVCEACHVDAPKVSDEELKELIGLIPDWVPQVRDNVMMLEREYKFKNYKLAWAFANKVSELAESEFHHPSILLEWGKVTVTWWTHSIGGLHKNDFICAAKTDQLGD</sequence>
<dbReference type="EC" id="4.2.1.96" evidence="1"/>
<dbReference type="EMBL" id="CP000083">
    <property type="protein sequence ID" value="AAZ24779.1"/>
    <property type="molecule type" value="Genomic_DNA"/>
</dbReference>
<dbReference type="RefSeq" id="WP_011044518.1">
    <property type="nucleotide sequence ID" value="NC_003910.7"/>
</dbReference>
<dbReference type="SMR" id="Q47XN8"/>
<dbReference type="STRING" id="167879.CPS_3765"/>
<dbReference type="KEGG" id="cps:CPS_3765"/>
<dbReference type="eggNOG" id="COG2154">
    <property type="taxonomic scope" value="Bacteria"/>
</dbReference>
<dbReference type="HOGENOM" id="CLU_081974_2_2_6"/>
<dbReference type="Proteomes" id="UP000000547">
    <property type="component" value="Chromosome"/>
</dbReference>
<dbReference type="GO" id="GO:0008124">
    <property type="term" value="F:4-alpha-hydroxytetrahydrobiopterin dehydratase activity"/>
    <property type="evidence" value="ECO:0007669"/>
    <property type="project" value="UniProtKB-UniRule"/>
</dbReference>
<dbReference type="GO" id="GO:0006729">
    <property type="term" value="P:tetrahydrobiopterin biosynthetic process"/>
    <property type="evidence" value="ECO:0007669"/>
    <property type="project" value="InterPro"/>
</dbReference>
<dbReference type="CDD" id="cd00913">
    <property type="entry name" value="PCD_DCoH_subfamily_a"/>
    <property type="match status" value="1"/>
</dbReference>
<dbReference type="Gene3D" id="3.30.1360.20">
    <property type="entry name" value="Transcriptional coactivator/pterin dehydratase"/>
    <property type="match status" value="1"/>
</dbReference>
<dbReference type="HAMAP" id="MF_00434">
    <property type="entry name" value="Pterin_4_alpha"/>
    <property type="match status" value="1"/>
</dbReference>
<dbReference type="InterPro" id="IPR036428">
    <property type="entry name" value="PCD_sf"/>
</dbReference>
<dbReference type="InterPro" id="IPR050376">
    <property type="entry name" value="Pterin-4-alpha-carb_dehyd"/>
</dbReference>
<dbReference type="InterPro" id="IPR001533">
    <property type="entry name" value="Pterin_deHydtase"/>
</dbReference>
<dbReference type="NCBIfam" id="NF002016">
    <property type="entry name" value="PRK00823.1-1"/>
    <property type="match status" value="1"/>
</dbReference>
<dbReference type="PANTHER" id="PTHR42805">
    <property type="entry name" value="PTERIN-4-ALPHA-CARBINOLAMINE DEHYDRATASE-RELATED"/>
    <property type="match status" value="1"/>
</dbReference>
<dbReference type="PANTHER" id="PTHR42805:SF1">
    <property type="entry name" value="PTERIN-4-ALPHA-CARBINOLAMINE DEHYDRATASE-RELATED"/>
    <property type="match status" value="1"/>
</dbReference>
<dbReference type="Pfam" id="PF01329">
    <property type="entry name" value="Pterin_4a"/>
    <property type="match status" value="1"/>
</dbReference>
<dbReference type="SUPFAM" id="SSF55248">
    <property type="entry name" value="PCD-like"/>
    <property type="match status" value="1"/>
</dbReference>
<comment type="catalytic activity">
    <reaction evidence="1">
        <text>(4aS,6R)-4a-hydroxy-L-erythro-5,6,7,8-tetrahydrobiopterin = (6R)-L-erythro-6,7-dihydrobiopterin + H2O</text>
        <dbReference type="Rhea" id="RHEA:11920"/>
        <dbReference type="ChEBI" id="CHEBI:15377"/>
        <dbReference type="ChEBI" id="CHEBI:15642"/>
        <dbReference type="ChEBI" id="CHEBI:43120"/>
        <dbReference type="EC" id="4.2.1.96"/>
    </reaction>
</comment>
<comment type="similarity">
    <text evidence="1">Belongs to the pterin-4-alpha-carbinolamine dehydratase family.</text>
</comment>
<accession>Q47XN8</accession>
<evidence type="ECO:0000255" key="1">
    <source>
        <dbReference type="HAMAP-Rule" id="MF_00434"/>
    </source>
</evidence>
<name>PHS_COLP3</name>
<gene>
    <name type="ordered locus">CPS_3765</name>
</gene>